<feature type="signal peptide" evidence="6">
    <location>
        <begin position="1"/>
        <end position="20"/>
    </location>
</feature>
<feature type="propeptide" id="PRO_0000026370" description="Activation peptide" evidence="6">
    <location>
        <begin position="21"/>
        <end position="125"/>
    </location>
</feature>
<feature type="chain" id="PRO_0000026371" description="Cysteine proteinase">
    <location>
        <begin position="126"/>
        <end position="450"/>
    </location>
</feature>
<feature type="region of interest" description="108-residue extension">
    <location>
        <begin position="343"/>
        <end position="450"/>
    </location>
</feature>
<feature type="active site" evidence="1">
    <location>
        <position position="150"/>
    </location>
</feature>
<feature type="active site" evidence="1">
    <location>
        <position position="287"/>
    </location>
</feature>
<feature type="active site" evidence="1">
    <location>
        <position position="307"/>
    </location>
</feature>
<feature type="glycosylation site" description="N-linked (GlcNAc...) asparagine" evidence="2">
    <location>
        <position position="120"/>
    </location>
</feature>
<feature type="glycosylation site" description="N-linked (GlcNAc...) asparagine" evidence="2">
    <location>
        <position position="397"/>
    </location>
</feature>
<feature type="disulfide bond" evidence="1">
    <location>
        <begin position="147"/>
        <end position="188"/>
    </location>
</feature>
<feature type="sequence variant" description="In strain: Rhodesiense WRATAT 1.1.">
    <original>L</original>
    <variation>V</variation>
    <location>
        <position position="115"/>
    </location>
</feature>
<feature type="sequence variant" description="In strain: Rhodesiense WRATAT 1.1.">
    <original>V</original>
    <variation>D</variation>
    <location>
        <position position="143"/>
    </location>
</feature>
<feature type="sequence variant" description="In strain: Rhodesiense WRATAT 1.1.">
    <original>S</original>
    <variation>F</variation>
    <location>
        <position position="186"/>
    </location>
</feature>
<feature type="sequence variant" description="In strain: Rhodesiense WRATAT 1.1.">
    <original>N</original>
    <variation>G</variation>
    <location>
        <position position="189"/>
    </location>
</feature>
<feature type="sequence variant" description="In strain: Rhodesiense WRATAT 1.1.">
    <original>E</original>
    <variation>T</variation>
    <location>
        <position position="267"/>
    </location>
</feature>
<feature type="sequence variant" description="In strain: Rhodesiense WRATAT 1.1.">
    <original>K</original>
    <variation>E</variation>
    <location>
        <position position="283"/>
    </location>
</feature>
<proteinExistence type="evidence at protein level"/>
<keyword id="KW-0903">Direct protein sequencing</keyword>
<keyword id="KW-1015">Disulfide bond</keyword>
<keyword id="KW-0325">Glycoprotein</keyword>
<keyword id="KW-0378">Hydrolase</keyword>
<keyword id="KW-0458">Lysosome</keyword>
<keyword id="KW-0645">Protease</keyword>
<keyword id="KW-0732">Signal</keyword>
<keyword id="KW-0788">Thiol protease</keyword>
<keyword id="KW-0843">Virulence</keyword>
<keyword id="KW-0865">Zymogen</keyword>
<accession>P14658</accession>
<comment type="function">
    <text>The cysteine proteinases have a potential role in host-parasite interaction and virulence.</text>
</comment>
<comment type="subcellular location">
    <subcellularLocation>
        <location>Lysosome</location>
    </subcellularLocation>
</comment>
<comment type="developmental stage">
    <text>Predominantly expressed by stumpy forms, which are preadapted for differentiation into procyclic trypanosomes in the tse-tse midgut.</text>
</comment>
<comment type="miscellaneous">
    <text>The 108-residue extension appears likely to be processed in part to produce the mature enzyme, and may be involved in targeting the protein within the cell.</text>
</comment>
<comment type="similarity">
    <text evidence="3 4 5">Belongs to the peptidase C1 family.</text>
</comment>
<reference key="1">
    <citation type="journal article" date="1989" name="FEBS Lett.">
        <title>A cysteine proteinase cDNA from Trypanosoma brucei predicts an enzyme with an unusual C-terminal extension.</title>
        <authorList>
            <person name="Mottram J.C."/>
            <person name="North M.J."/>
            <person name="Barry J.D."/>
            <person name="Coombs G.H."/>
        </authorList>
    </citation>
    <scope>NUCLEOTIDE SEQUENCE [MRNA]</scope>
    <source>
        <strain>I STAR Serodeme</strain>
    </source>
</reference>
<reference key="2">
    <citation type="journal article" date="1989" name="Mol. Biochem. Parasitol.">
        <title>Further characterization and partial amino acid sequence of a cysteine proteinase from Trypanosoma cruzi.</title>
        <authorList>
            <person name="Cazzulo J.J."/>
            <person name="Couso R."/>
            <person name="Raimondi A."/>
            <person name="Wernstedt C."/>
            <person name="Hellman U."/>
        </authorList>
    </citation>
    <scope>PARTIAL PROTEIN SEQUENCE</scope>
</reference>
<reference key="3">
    <citation type="journal article" date="1990" name="Nucleic Acids Res.">
        <title>Cloning and sequencing of the cysteine protease cDNA from Trypanosoma brucei rhodesiense.</title>
        <authorList>
            <person name="Pamer E.G."/>
            <person name="Davis C.E."/>
            <person name="Eakin A."/>
            <person name="So M."/>
        </authorList>
    </citation>
    <scope>NUCLEOTIDE SEQUENCE [MRNA]</scope>
    <source>
        <strain>Rhodesiense WRATAT 1.1</strain>
    </source>
</reference>
<evidence type="ECO:0000250" key="1"/>
<evidence type="ECO:0000255" key="2"/>
<evidence type="ECO:0000255" key="3">
    <source>
        <dbReference type="PROSITE-ProRule" id="PRU10088"/>
    </source>
</evidence>
<evidence type="ECO:0000255" key="4">
    <source>
        <dbReference type="PROSITE-ProRule" id="PRU10089"/>
    </source>
</evidence>
<evidence type="ECO:0000255" key="5">
    <source>
        <dbReference type="PROSITE-ProRule" id="PRU10090"/>
    </source>
</evidence>
<evidence type="ECO:0000305" key="6"/>
<protein>
    <recommendedName>
        <fullName>Cysteine proteinase</fullName>
        <ecNumber>3.4.22.-</ecNumber>
    </recommendedName>
</protein>
<organism>
    <name type="scientific">Trypanosoma brucei brucei</name>
    <dbReference type="NCBI Taxonomy" id="5702"/>
    <lineage>
        <taxon>Eukaryota</taxon>
        <taxon>Discoba</taxon>
        <taxon>Euglenozoa</taxon>
        <taxon>Kinetoplastea</taxon>
        <taxon>Metakinetoplastina</taxon>
        <taxon>Trypanosomatida</taxon>
        <taxon>Trypanosomatidae</taxon>
        <taxon>Trypanosoma</taxon>
    </lineage>
</organism>
<dbReference type="EC" id="3.4.22.-"/>
<dbReference type="EMBL" id="X16465">
    <property type="protein sequence ID" value="CAA34485.1"/>
    <property type="molecule type" value="mRNA"/>
</dbReference>
<dbReference type="EMBL" id="X54353">
    <property type="protein sequence ID" value="CAA38238.1"/>
    <property type="molecule type" value="mRNA"/>
</dbReference>
<dbReference type="PIR" id="S07051">
    <property type="entry name" value="S07051"/>
</dbReference>
<dbReference type="PIR" id="S12099">
    <property type="entry name" value="S12099"/>
</dbReference>
<dbReference type="SMR" id="P14658"/>
<dbReference type="MEROPS" id="C01.072"/>
<dbReference type="SwissPalm" id="P14658"/>
<dbReference type="GO" id="GO:0005764">
    <property type="term" value="C:lysosome"/>
    <property type="evidence" value="ECO:0007669"/>
    <property type="project" value="UniProtKB-SubCell"/>
</dbReference>
<dbReference type="GO" id="GO:0004197">
    <property type="term" value="F:cysteine-type endopeptidase activity"/>
    <property type="evidence" value="ECO:0007669"/>
    <property type="project" value="InterPro"/>
</dbReference>
<dbReference type="GO" id="GO:0006508">
    <property type="term" value="P:proteolysis"/>
    <property type="evidence" value="ECO:0007669"/>
    <property type="project" value="UniProtKB-KW"/>
</dbReference>
<dbReference type="CDD" id="cd02248">
    <property type="entry name" value="Peptidase_C1A"/>
    <property type="match status" value="1"/>
</dbReference>
<dbReference type="FunFam" id="3.90.70.10:FF:000138">
    <property type="entry name" value="Cruzipain"/>
    <property type="match status" value="1"/>
</dbReference>
<dbReference type="Gene3D" id="1.10.287.2250">
    <property type="match status" value="1"/>
</dbReference>
<dbReference type="Gene3D" id="3.90.70.10">
    <property type="entry name" value="Cysteine proteinases"/>
    <property type="match status" value="1"/>
</dbReference>
<dbReference type="InterPro" id="IPR021981">
    <property type="entry name" value="DUF3586"/>
</dbReference>
<dbReference type="InterPro" id="IPR038765">
    <property type="entry name" value="Papain-like_cys_pep_sf"/>
</dbReference>
<dbReference type="InterPro" id="IPR025661">
    <property type="entry name" value="Pept_asp_AS"/>
</dbReference>
<dbReference type="InterPro" id="IPR000169">
    <property type="entry name" value="Pept_cys_AS"/>
</dbReference>
<dbReference type="InterPro" id="IPR025660">
    <property type="entry name" value="Pept_his_AS"/>
</dbReference>
<dbReference type="InterPro" id="IPR013128">
    <property type="entry name" value="Peptidase_C1A"/>
</dbReference>
<dbReference type="InterPro" id="IPR000668">
    <property type="entry name" value="Peptidase_C1A_C"/>
</dbReference>
<dbReference type="InterPro" id="IPR039417">
    <property type="entry name" value="Peptidase_C1A_papain-like"/>
</dbReference>
<dbReference type="InterPro" id="IPR013201">
    <property type="entry name" value="Prot_inhib_I29"/>
</dbReference>
<dbReference type="PANTHER" id="PTHR12411">
    <property type="entry name" value="CYSTEINE PROTEASE FAMILY C1-RELATED"/>
    <property type="match status" value="1"/>
</dbReference>
<dbReference type="Pfam" id="PF12131">
    <property type="entry name" value="DUF3586"/>
    <property type="match status" value="1"/>
</dbReference>
<dbReference type="Pfam" id="PF08246">
    <property type="entry name" value="Inhibitor_I29"/>
    <property type="match status" value="1"/>
</dbReference>
<dbReference type="Pfam" id="PF00112">
    <property type="entry name" value="Peptidase_C1"/>
    <property type="match status" value="1"/>
</dbReference>
<dbReference type="PRINTS" id="PR00705">
    <property type="entry name" value="PAPAIN"/>
</dbReference>
<dbReference type="SMART" id="SM00848">
    <property type="entry name" value="Inhibitor_I29"/>
    <property type="match status" value="1"/>
</dbReference>
<dbReference type="SMART" id="SM00645">
    <property type="entry name" value="Pept_C1"/>
    <property type="match status" value="1"/>
</dbReference>
<dbReference type="SUPFAM" id="SSF54001">
    <property type="entry name" value="Cysteine proteinases"/>
    <property type="match status" value="1"/>
</dbReference>
<dbReference type="PROSITE" id="PS00640">
    <property type="entry name" value="THIOL_PROTEASE_ASN"/>
    <property type="match status" value="1"/>
</dbReference>
<dbReference type="PROSITE" id="PS00139">
    <property type="entry name" value="THIOL_PROTEASE_CYS"/>
    <property type="match status" value="1"/>
</dbReference>
<dbReference type="PROSITE" id="PS00639">
    <property type="entry name" value="THIOL_PROTEASE_HIS"/>
    <property type="match status" value="1"/>
</dbReference>
<name>CYSP_TRYBB</name>
<sequence>MPRTEMVRFVRLPVVLLAMAACLASVALGSLHVEESLEMRFAAFKKKYGKVYKDAKEEAFRFRAFEENMEQAKIQAAANPYATFGVTPFSDMTREEFRARYRNGASYFAAAQKRLRKTVNVTTGRAPAAVDWREKGAVTPVKVQGQCGSCWAFSTIGNIEGQWQVAGNPLVSLSEQMLVSCDTIDSGCNGGLMDNAFNWIVNSNGGNVFTEASYPYVSGNGEQPQCQMNGHEIGAAITDHVDLPQDEDAIAAYLAENGPLAIAVDAESFMDYNGGILTSCTSKQLDHGVLLVGYNDNSNPPYWIIKNSWSNMWGEDGYIRIEKGTNQCLMNQAVSSAVVGGPTPPPPPPPPPSATFTQDFCEGKGCTKGCSHATFPTGECVQTTGVGSVIATCGASNLTQIIYPLSRSCSGPSVPITVPLDKCIPILIGSVEYHCSTNPPTKAARLVPHQ</sequence>